<keyword id="KW-0997">Cell inner membrane</keyword>
<keyword id="KW-1003">Cell membrane</keyword>
<keyword id="KW-0406">Ion transport</keyword>
<keyword id="KW-0472">Membrane</keyword>
<keyword id="KW-0630">Potassium</keyword>
<keyword id="KW-0633">Potassium transport</keyword>
<keyword id="KW-0769">Symport</keyword>
<keyword id="KW-0812">Transmembrane</keyword>
<keyword id="KW-1133">Transmembrane helix</keyword>
<keyword id="KW-0813">Transport</keyword>
<organism>
    <name type="scientific">Brucella melitensis biotype 2 (strain ATCC 23457)</name>
    <dbReference type="NCBI Taxonomy" id="546272"/>
    <lineage>
        <taxon>Bacteria</taxon>
        <taxon>Pseudomonadati</taxon>
        <taxon>Pseudomonadota</taxon>
        <taxon>Alphaproteobacteria</taxon>
        <taxon>Hyphomicrobiales</taxon>
        <taxon>Brucellaceae</taxon>
        <taxon>Brucella/Ochrobactrum group</taxon>
        <taxon>Brucella</taxon>
    </lineage>
</organism>
<protein>
    <recommendedName>
        <fullName evidence="1">Probable potassium transport system protein Kup</fullName>
    </recommendedName>
</protein>
<comment type="function">
    <text evidence="1">Transport of potassium into the cell. Likely operates as a K(+):H(+) symporter.</text>
</comment>
<comment type="catalytic activity">
    <reaction evidence="1">
        <text>K(+)(in) + H(+)(in) = K(+)(out) + H(+)(out)</text>
        <dbReference type="Rhea" id="RHEA:28490"/>
        <dbReference type="ChEBI" id="CHEBI:15378"/>
        <dbReference type="ChEBI" id="CHEBI:29103"/>
    </reaction>
    <physiologicalReaction direction="right-to-left" evidence="1">
        <dbReference type="Rhea" id="RHEA:28492"/>
    </physiologicalReaction>
</comment>
<comment type="subcellular location">
    <subcellularLocation>
        <location evidence="1">Cell inner membrane</location>
        <topology evidence="1">Multi-pass membrane protein</topology>
    </subcellularLocation>
</comment>
<comment type="similarity">
    <text evidence="1">Belongs to the HAK/KUP transporter (TC 2.A.72) family.</text>
</comment>
<gene>
    <name evidence="1" type="primary">kup</name>
    <name type="ordered locus">BMEA_A1430</name>
</gene>
<accession>C0RE23</accession>
<reference key="1">
    <citation type="submission" date="2009-03" db="EMBL/GenBank/DDBJ databases">
        <title>Brucella melitensis ATCC 23457 whole genome shotgun sequencing project.</title>
        <authorList>
            <person name="Setubal J.C."/>
            <person name="Boyle S."/>
            <person name="Crasta O.R."/>
            <person name="Gillespie J.J."/>
            <person name="Kenyon R.W."/>
            <person name="Lu J."/>
            <person name="Mane S."/>
            <person name="Nagrani S."/>
            <person name="Shallom J.M."/>
            <person name="Shallom S."/>
            <person name="Shukla M."/>
            <person name="Snyder E.E."/>
            <person name="Sobral B.W."/>
            <person name="Wattam A.R."/>
            <person name="Will R."/>
            <person name="Williams K."/>
            <person name="Yoo H."/>
            <person name="Munk C."/>
            <person name="Tapia R."/>
            <person name="Han C."/>
            <person name="Detter J.C."/>
            <person name="Bruce D."/>
            <person name="Brettin T.S."/>
        </authorList>
    </citation>
    <scope>NUCLEOTIDE SEQUENCE [LARGE SCALE GENOMIC DNA]</scope>
    <source>
        <strain>ATCC 23457</strain>
    </source>
</reference>
<proteinExistence type="inferred from homology"/>
<sequence>MSGELNGNDTSAQAAVSAGSVLEGAAFADEGEQHNESMKTLVLGALGVVYGDIGTSPIYAFREALHAAATNGILARSDILGVVSLIFWALTLVVTVKYVLFVLRADNNGEGGILSLMALVRGALKGRPDLILGVGICGAALFFGDAVITPAISVLSAMEGLEIVAPNLTPFVVPATVVILVTLFSVQKLGTGRVAIVFGPIMALWFVALGASGLWHIFDDPTVMAALNPYYAVRFLTVSPAVAFVTVGAVFLAMTGAEALYADLGHFGRKPIVRAWLWIVFPCLLLNYFGQAAFILSHGEAAALPFFQMIPSFALWPMVLLATAATVIASQAVITGAYSVARQAVQLNILSRLEIQHTSEKLHGQIYIPRVNLLLGLAVVILVLGFEKSSNLAAAYGIAVTGNMLVTTVLLYIVMTRIWNWRVSRALPIILGFLVIDMLFFSANIIKVHEGGWASIGIATVLVLIMWTWVRGTRHLFQKTRKAEVPLDLIVEQMAKRPPTIVPGTAVFLTGDPKSAPTALMHSLKHYKVLHENNVILTVVTASKPWVASADRARVSQYNERFMLVTLTFGYMQQPNIPRALGLCRRLGWKFDIMTTSFFLSRRSLKASVHSGMPLWQDKLFILLARTASDATEYFQIPTGRVVEIGTQVNI</sequence>
<feature type="chain" id="PRO_1000185113" description="Probable potassium transport system protein Kup">
    <location>
        <begin position="1"/>
        <end position="651"/>
    </location>
</feature>
<feature type="transmembrane region" description="Helical" evidence="1">
    <location>
        <begin position="41"/>
        <end position="61"/>
    </location>
</feature>
<feature type="transmembrane region" description="Helical" evidence="1">
    <location>
        <begin position="82"/>
        <end position="102"/>
    </location>
</feature>
<feature type="transmembrane region" description="Helical" evidence="1">
    <location>
        <begin position="130"/>
        <end position="150"/>
    </location>
</feature>
<feature type="transmembrane region" description="Helical" evidence="1">
    <location>
        <begin position="163"/>
        <end position="183"/>
    </location>
</feature>
<feature type="transmembrane region" description="Helical" evidence="1">
    <location>
        <begin position="194"/>
        <end position="214"/>
    </location>
</feature>
<feature type="transmembrane region" description="Helical" evidence="1">
    <location>
        <begin position="235"/>
        <end position="255"/>
    </location>
</feature>
<feature type="transmembrane region" description="Helical" evidence="1">
    <location>
        <begin position="276"/>
        <end position="296"/>
    </location>
</feature>
<feature type="transmembrane region" description="Helical" evidence="1">
    <location>
        <begin position="309"/>
        <end position="329"/>
    </location>
</feature>
<feature type="transmembrane region" description="Helical" evidence="1">
    <location>
        <begin position="366"/>
        <end position="386"/>
    </location>
</feature>
<feature type="transmembrane region" description="Helical" evidence="1">
    <location>
        <begin position="395"/>
        <end position="415"/>
    </location>
</feature>
<feature type="transmembrane region" description="Helical" evidence="1">
    <location>
        <begin position="426"/>
        <end position="446"/>
    </location>
</feature>
<feature type="transmembrane region" description="Helical" evidence="1">
    <location>
        <begin position="450"/>
        <end position="470"/>
    </location>
</feature>
<dbReference type="EMBL" id="CP001488">
    <property type="protein sequence ID" value="ACO01145.1"/>
    <property type="molecule type" value="Genomic_DNA"/>
</dbReference>
<dbReference type="RefSeq" id="WP_004686379.1">
    <property type="nucleotide sequence ID" value="NC_012441.1"/>
</dbReference>
<dbReference type="KEGG" id="bmi:BMEA_A1430"/>
<dbReference type="HOGENOM" id="CLU_008142_4_2_5"/>
<dbReference type="Proteomes" id="UP000001748">
    <property type="component" value="Chromosome I"/>
</dbReference>
<dbReference type="GO" id="GO:0005886">
    <property type="term" value="C:plasma membrane"/>
    <property type="evidence" value="ECO:0007669"/>
    <property type="project" value="UniProtKB-SubCell"/>
</dbReference>
<dbReference type="GO" id="GO:0015079">
    <property type="term" value="F:potassium ion transmembrane transporter activity"/>
    <property type="evidence" value="ECO:0007669"/>
    <property type="project" value="UniProtKB-UniRule"/>
</dbReference>
<dbReference type="GO" id="GO:0015293">
    <property type="term" value="F:symporter activity"/>
    <property type="evidence" value="ECO:0007669"/>
    <property type="project" value="UniProtKB-UniRule"/>
</dbReference>
<dbReference type="HAMAP" id="MF_01522">
    <property type="entry name" value="Kup"/>
    <property type="match status" value="1"/>
</dbReference>
<dbReference type="InterPro" id="IPR003855">
    <property type="entry name" value="K+_transporter"/>
</dbReference>
<dbReference type="InterPro" id="IPR053952">
    <property type="entry name" value="K_trans_C"/>
</dbReference>
<dbReference type="InterPro" id="IPR053951">
    <property type="entry name" value="K_trans_N"/>
</dbReference>
<dbReference type="InterPro" id="IPR023051">
    <property type="entry name" value="Kup"/>
</dbReference>
<dbReference type="PANTHER" id="PTHR30540:SF79">
    <property type="entry name" value="LOW AFFINITY POTASSIUM TRANSPORT SYSTEM PROTEIN KUP"/>
    <property type="match status" value="1"/>
</dbReference>
<dbReference type="PANTHER" id="PTHR30540">
    <property type="entry name" value="OSMOTIC STRESS POTASSIUM TRANSPORTER"/>
    <property type="match status" value="1"/>
</dbReference>
<dbReference type="Pfam" id="PF02705">
    <property type="entry name" value="K_trans"/>
    <property type="match status" value="1"/>
</dbReference>
<dbReference type="Pfam" id="PF22776">
    <property type="entry name" value="K_trans_C"/>
    <property type="match status" value="1"/>
</dbReference>
<evidence type="ECO:0000255" key="1">
    <source>
        <dbReference type="HAMAP-Rule" id="MF_01522"/>
    </source>
</evidence>
<name>KUP_BRUMB</name>